<gene>
    <name evidence="1" type="primary">atpF</name>
    <name type="ordered locus">FTT_0060</name>
</gene>
<organism>
    <name type="scientific">Francisella tularensis subsp. tularensis (strain SCHU S4 / Schu 4)</name>
    <dbReference type="NCBI Taxonomy" id="177416"/>
    <lineage>
        <taxon>Bacteria</taxon>
        <taxon>Pseudomonadati</taxon>
        <taxon>Pseudomonadota</taxon>
        <taxon>Gammaproteobacteria</taxon>
        <taxon>Thiotrichales</taxon>
        <taxon>Francisellaceae</taxon>
        <taxon>Francisella</taxon>
    </lineage>
</organism>
<proteinExistence type="inferred from homology"/>
<sequence length="156" mass="17369">MDINITLIGQMITFAIFVGFTMKFVWPPLRKALEERREKIAEGLASADRASRELEVAKRQSAEILREAKAKATEIVENAYVRAHKVDEQAKEEAIAAADKIKSMAIAEIEQEKVKAKEQLKQELVNLAMAAASKIIAASVDEKASKKVLEDFVEKV</sequence>
<reference key="1">
    <citation type="journal article" date="2005" name="Nat. Genet.">
        <title>The complete genome sequence of Francisella tularensis, the causative agent of tularemia.</title>
        <authorList>
            <person name="Larsson P."/>
            <person name="Oyston P.C.F."/>
            <person name="Chain P."/>
            <person name="Chu M.C."/>
            <person name="Duffield M."/>
            <person name="Fuxelius H.-H."/>
            <person name="Garcia E."/>
            <person name="Haelltorp G."/>
            <person name="Johansson D."/>
            <person name="Isherwood K.E."/>
            <person name="Karp P.D."/>
            <person name="Larsson E."/>
            <person name="Liu Y."/>
            <person name="Michell S."/>
            <person name="Prior J."/>
            <person name="Prior R."/>
            <person name="Malfatti S."/>
            <person name="Sjoestedt A."/>
            <person name="Svensson K."/>
            <person name="Thompson N."/>
            <person name="Vergez L."/>
            <person name="Wagg J.K."/>
            <person name="Wren B.W."/>
            <person name="Lindler L.E."/>
            <person name="Andersson S.G.E."/>
            <person name="Forsman M."/>
            <person name="Titball R.W."/>
        </authorList>
    </citation>
    <scope>NUCLEOTIDE SEQUENCE [LARGE SCALE GENOMIC DNA]</scope>
    <source>
        <strain>SCHU S4 / Schu 4</strain>
    </source>
</reference>
<feature type="chain" id="PRO_0000368493" description="ATP synthase subunit b">
    <location>
        <begin position="1"/>
        <end position="156"/>
    </location>
</feature>
<feature type="transmembrane region" description="Helical" evidence="1">
    <location>
        <begin position="5"/>
        <end position="27"/>
    </location>
</feature>
<keyword id="KW-0066">ATP synthesis</keyword>
<keyword id="KW-0997">Cell inner membrane</keyword>
<keyword id="KW-1003">Cell membrane</keyword>
<keyword id="KW-0138">CF(0)</keyword>
<keyword id="KW-0375">Hydrogen ion transport</keyword>
<keyword id="KW-0406">Ion transport</keyword>
<keyword id="KW-0472">Membrane</keyword>
<keyword id="KW-1185">Reference proteome</keyword>
<keyword id="KW-0812">Transmembrane</keyword>
<keyword id="KW-1133">Transmembrane helix</keyword>
<keyword id="KW-0813">Transport</keyword>
<comment type="function">
    <text evidence="1">F(1)F(0) ATP synthase produces ATP from ADP in the presence of a proton or sodium gradient. F-type ATPases consist of two structural domains, F(1) containing the extramembraneous catalytic core and F(0) containing the membrane proton channel, linked together by a central stalk and a peripheral stalk. During catalysis, ATP synthesis in the catalytic domain of F(1) is coupled via a rotary mechanism of the central stalk subunits to proton translocation.</text>
</comment>
<comment type="function">
    <text evidence="1">Component of the F(0) channel, it forms part of the peripheral stalk, linking F(1) to F(0).</text>
</comment>
<comment type="subunit">
    <text evidence="1">F-type ATPases have 2 components, F(1) - the catalytic core - and F(0) - the membrane proton channel. F(1) has five subunits: alpha(3), beta(3), gamma(1), delta(1), epsilon(1). F(0) has three main subunits: a(1), b(2) and c(10-14). The alpha and beta chains form an alternating ring which encloses part of the gamma chain. F(1) is attached to F(0) by a central stalk formed by the gamma and epsilon chains, while a peripheral stalk is formed by the delta and b chains.</text>
</comment>
<comment type="subcellular location">
    <subcellularLocation>
        <location evidence="1">Cell inner membrane</location>
        <topology evidence="1">Single-pass membrane protein</topology>
    </subcellularLocation>
</comment>
<comment type="similarity">
    <text evidence="1">Belongs to the ATPase B chain family.</text>
</comment>
<protein>
    <recommendedName>
        <fullName evidence="1">ATP synthase subunit b</fullName>
    </recommendedName>
    <alternativeName>
        <fullName evidence="1">ATP synthase F(0) sector subunit b</fullName>
    </alternativeName>
    <alternativeName>
        <fullName evidence="1">ATPase subunit I</fullName>
    </alternativeName>
    <alternativeName>
        <fullName evidence="1">F-type ATPase subunit b</fullName>
        <shortName evidence="1">F-ATPase subunit b</shortName>
    </alternativeName>
</protein>
<accession>Q5NIK7</accession>
<evidence type="ECO:0000255" key="1">
    <source>
        <dbReference type="HAMAP-Rule" id="MF_01398"/>
    </source>
</evidence>
<dbReference type="EMBL" id="AJ749949">
    <property type="protein sequence ID" value="CAG44693.1"/>
    <property type="molecule type" value="Genomic_DNA"/>
</dbReference>
<dbReference type="RefSeq" id="WP_003019758.1">
    <property type="nucleotide sequence ID" value="NZ_CP010290.1"/>
</dbReference>
<dbReference type="RefSeq" id="YP_169135.1">
    <property type="nucleotide sequence ID" value="NC_006570.2"/>
</dbReference>
<dbReference type="SMR" id="Q5NIK7"/>
<dbReference type="STRING" id="177416.FTT_0060"/>
<dbReference type="DNASU" id="3191918"/>
<dbReference type="EnsemblBacteria" id="CAG44693">
    <property type="protein sequence ID" value="CAG44693"/>
    <property type="gene ID" value="FTT_0060"/>
</dbReference>
<dbReference type="KEGG" id="ftu:FTT_0060"/>
<dbReference type="eggNOG" id="COG0711">
    <property type="taxonomic scope" value="Bacteria"/>
</dbReference>
<dbReference type="OrthoDB" id="9788020at2"/>
<dbReference type="Proteomes" id="UP000001174">
    <property type="component" value="Chromosome"/>
</dbReference>
<dbReference type="GO" id="GO:0005886">
    <property type="term" value="C:plasma membrane"/>
    <property type="evidence" value="ECO:0007669"/>
    <property type="project" value="UniProtKB-SubCell"/>
</dbReference>
<dbReference type="GO" id="GO:0045259">
    <property type="term" value="C:proton-transporting ATP synthase complex"/>
    <property type="evidence" value="ECO:0007669"/>
    <property type="project" value="UniProtKB-KW"/>
</dbReference>
<dbReference type="GO" id="GO:0046933">
    <property type="term" value="F:proton-transporting ATP synthase activity, rotational mechanism"/>
    <property type="evidence" value="ECO:0007669"/>
    <property type="project" value="UniProtKB-UniRule"/>
</dbReference>
<dbReference type="GO" id="GO:0046961">
    <property type="term" value="F:proton-transporting ATPase activity, rotational mechanism"/>
    <property type="evidence" value="ECO:0007669"/>
    <property type="project" value="TreeGrafter"/>
</dbReference>
<dbReference type="CDD" id="cd06503">
    <property type="entry name" value="ATP-synt_Fo_b"/>
    <property type="match status" value="1"/>
</dbReference>
<dbReference type="Gene3D" id="6.10.250.1580">
    <property type="match status" value="1"/>
</dbReference>
<dbReference type="HAMAP" id="MF_01398">
    <property type="entry name" value="ATP_synth_b_bprime"/>
    <property type="match status" value="1"/>
</dbReference>
<dbReference type="InterPro" id="IPR028987">
    <property type="entry name" value="ATP_synth_B-like_membr_sf"/>
</dbReference>
<dbReference type="InterPro" id="IPR002146">
    <property type="entry name" value="ATP_synth_b/b'su_bac/chlpt"/>
</dbReference>
<dbReference type="InterPro" id="IPR005864">
    <property type="entry name" value="ATP_synth_F0_bsu_bac"/>
</dbReference>
<dbReference type="InterPro" id="IPR050059">
    <property type="entry name" value="ATP_synthase_B_chain"/>
</dbReference>
<dbReference type="NCBIfam" id="TIGR01144">
    <property type="entry name" value="ATP_synt_b"/>
    <property type="match status" value="1"/>
</dbReference>
<dbReference type="NCBIfam" id="NF004411">
    <property type="entry name" value="PRK05759.1-2"/>
    <property type="match status" value="1"/>
</dbReference>
<dbReference type="PANTHER" id="PTHR33445:SF1">
    <property type="entry name" value="ATP SYNTHASE SUBUNIT B"/>
    <property type="match status" value="1"/>
</dbReference>
<dbReference type="PANTHER" id="PTHR33445">
    <property type="entry name" value="ATP SYNTHASE SUBUNIT B', CHLOROPLASTIC"/>
    <property type="match status" value="1"/>
</dbReference>
<dbReference type="Pfam" id="PF00430">
    <property type="entry name" value="ATP-synt_B"/>
    <property type="match status" value="1"/>
</dbReference>
<dbReference type="SUPFAM" id="SSF81573">
    <property type="entry name" value="F1F0 ATP synthase subunit B, membrane domain"/>
    <property type="match status" value="1"/>
</dbReference>
<name>ATPF_FRATT</name>